<evidence type="ECO:0000255" key="1">
    <source>
        <dbReference type="HAMAP-Rule" id="MF_01522"/>
    </source>
</evidence>
<evidence type="ECO:0000305" key="2"/>
<proteinExistence type="inferred from homology"/>
<reference key="1">
    <citation type="journal article" date="2010" name="PLoS ONE">
        <title>The complete genome sequence of Cupriavidus metallidurans strain CH34, a master survivalist in harsh and anthropogenic environments.</title>
        <authorList>
            <person name="Janssen P.J."/>
            <person name="Van Houdt R."/>
            <person name="Moors H."/>
            <person name="Monsieurs P."/>
            <person name="Morin N."/>
            <person name="Michaux A."/>
            <person name="Benotmane M.A."/>
            <person name="Leys N."/>
            <person name="Vallaeys T."/>
            <person name="Lapidus A."/>
            <person name="Monchy S."/>
            <person name="Medigue C."/>
            <person name="Taghavi S."/>
            <person name="McCorkle S."/>
            <person name="Dunn J."/>
            <person name="van der Lelie D."/>
            <person name="Mergeay M."/>
        </authorList>
    </citation>
    <scope>NUCLEOTIDE SEQUENCE [LARGE SCALE GENOMIC DNA]</scope>
    <source>
        <strain>ATCC 43123 / DSM 2839 / NBRC 102507 / CH34</strain>
    </source>
</reference>
<dbReference type="EMBL" id="CP000352">
    <property type="protein sequence ID" value="ABF08117.1"/>
    <property type="status" value="ALT_INIT"/>
    <property type="molecule type" value="Genomic_DNA"/>
</dbReference>
<dbReference type="RefSeq" id="WP_008646843.1">
    <property type="nucleotide sequence ID" value="NC_007973.1"/>
</dbReference>
<dbReference type="STRING" id="266264.Rmet_1231"/>
<dbReference type="KEGG" id="rme:Rmet_1231"/>
<dbReference type="eggNOG" id="COG3158">
    <property type="taxonomic scope" value="Bacteria"/>
</dbReference>
<dbReference type="HOGENOM" id="CLU_008142_4_2_4"/>
<dbReference type="Proteomes" id="UP000002429">
    <property type="component" value="Chromosome"/>
</dbReference>
<dbReference type="GO" id="GO:0005886">
    <property type="term" value="C:plasma membrane"/>
    <property type="evidence" value="ECO:0007669"/>
    <property type="project" value="UniProtKB-SubCell"/>
</dbReference>
<dbReference type="GO" id="GO:0015079">
    <property type="term" value="F:potassium ion transmembrane transporter activity"/>
    <property type="evidence" value="ECO:0007669"/>
    <property type="project" value="UniProtKB-UniRule"/>
</dbReference>
<dbReference type="GO" id="GO:0015293">
    <property type="term" value="F:symporter activity"/>
    <property type="evidence" value="ECO:0007669"/>
    <property type="project" value="UniProtKB-UniRule"/>
</dbReference>
<dbReference type="HAMAP" id="MF_01522">
    <property type="entry name" value="Kup"/>
    <property type="match status" value="1"/>
</dbReference>
<dbReference type="InterPro" id="IPR003855">
    <property type="entry name" value="K+_transporter"/>
</dbReference>
<dbReference type="InterPro" id="IPR053952">
    <property type="entry name" value="K_trans_C"/>
</dbReference>
<dbReference type="InterPro" id="IPR053951">
    <property type="entry name" value="K_trans_N"/>
</dbReference>
<dbReference type="InterPro" id="IPR023051">
    <property type="entry name" value="Kup"/>
</dbReference>
<dbReference type="PANTHER" id="PTHR30540:SF79">
    <property type="entry name" value="LOW AFFINITY POTASSIUM TRANSPORT SYSTEM PROTEIN KUP"/>
    <property type="match status" value="1"/>
</dbReference>
<dbReference type="PANTHER" id="PTHR30540">
    <property type="entry name" value="OSMOTIC STRESS POTASSIUM TRANSPORTER"/>
    <property type="match status" value="1"/>
</dbReference>
<dbReference type="Pfam" id="PF02705">
    <property type="entry name" value="K_trans"/>
    <property type="match status" value="1"/>
</dbReference>
<dbReference type="Pfam" id="PF22776">
    <property type="entry name" value="K_trans_C"/>
    <property type="match status" value="1"/>
</dbReference>
<feature type="chain" id="PRO_0000279817" description="Probable potassium transport system protein Kup">
    <location>
        <begin position="1"/>
        <end position="632"/>
    </location>
</feature>
<feature type="transmembrane region" description="Helical" evidence="1">
    <location>
        <begin position="19"/>
        <end position="39"/>
    </location>
</feature>
<feature type="transmembrane region" description="Helical" evidence="1">
    <location>
        <begin position="59"/>
        <end position="79"/>
    </location>
</feature>
<feature type="transmembrane region" description="Helical" evidence="1">
    <location>
        <begin position="110"/>
        <end position="130"/>
    </location>
</feature>
<feature type="transmembrane region" description="Helical" evidence="1">
    <location>
        <begin position="146"/>
        <end position="166"/>
    </location>
</feature>
<feature type="transmembrane region" description="Helical" evidence="1">
    <location>
        <begin position="178"/>
        <end position="198"/>
    </location>
</feature>
<feature type="transmembrane region" description="Helical" evidence="1">
    <location>
        <begin position="221"/>
        <end position="241"/>
    </location>
</feature>
<feature type="transmembrane region" description="Helical" evidence="1">
    <location>
        <begin position="256"/>
        <end position="276"/>
    </location>
</feature>
<feature type="transmembrane region" description="Helical" evidence="1">
    <location>
        <begin position="298"/>
        <end position="318"/>
    </location>
</feature>
<feature type="transmembrane region" description="Helical" evidence="1">
    <location>
        <begin position="346"/>
        <end position="366"/>
    </location>
</feature>
<feature type="transmembrane region" description="Helical" evidence="1">
    <location>
        <begin position="375"/>
        <end position="395"/>
    </location>
</feature>
<feature type="transmembrane region" description="Helical" evidence="1">
    <location>
        <begin position="403"/>
        <end position="423"/>
    </location>
</feature>
<feature type="transmembrane region" description="Helical" evidence="1">
    <location>
        <begin position="428"/>
        <end position="448"/>
    </location>
</feature>
<accession>Q1LP09</accession>
<protein>
    <recommendedName>
        <fullName evidence="1">Probable potassium transport system protein Kup</fullName>
    </recommendedName>
</protein>
<gene>
    <name evidence="1" type="primary">kup</name>
    <name type="ordered locus">Rmet_1231</name>
</gene>
<name>KUP_CUPMC</name>
<sequence length="632" mass="69116">MTQSTTSHYYVESPSSRALVVGAIGVVFGDIGTSPLYSLKECFSPEHGIPFSPDAVLGIISMLFWAFVIVVSLKYVMFVMRADNNGEGGILALMALALRTAAPRSRMAKLIMMFGIFGACMFYGDAVITPAISVLSAVEGLEIAAPGLSHFVIPITLLILALLFFIQRSGTHVVGKLFGPIMVVWFLALGALGLIHLVQAPGIVKAINPVYAVSFLHDHSLQAFIVLGSVFLVLTGAEALYADMGHFGAKPIRTAWFVLVMPCLILNYFGQGAMLLGNPDAIENPFYLMVPSALQLPMVLLATAATVIASQAVISGAFSLTSQAIQLGFMPRMRIRYTSAAEIGQIYMPVINWILLVLVICVVLAFKKSDNLAAAYGIAVTTTMVITTFLAALVMRNVWKWNPALVTLISLTFLVVDMSFFAANLLKIAEGGWFPLLMGGSAFFLLMTWHSGRKLLRARSLEDGIPLEPFIAGLLAHPPHRVEGTAVFLTGNTESVPVSLLHNLKHNRVLHERVVFLQFVTRDIPYVDDDERLSCKDLGGGVYILKSEYGFKETPDVQRVLDLAQRKLGMQFELMETSFFIARESVIPSKLPGMSMWRESLFAWMHQNGAKPSDFFSIPANRVVELGTKVEI</sequence>
<organism>
    <name type="scientific">Cupriavidus metallidurans (strain ATCC 43123 / DSM 2839 / NBRC 102507 / CH34)</name>
    <name type="common">Ralstonia metallidurans</name>
    <dbReference type="NCBI Taxonomy" id="266264"/>
    <lineage>
        <taxon>Bacteria</taxon>
        <taxon>Pseudomonadati</taxon>
        <taxon>Pseudomonadota</taxon>
        <taxon>Betaproteobacteria</taxon>
        <taxon>Burkholderiales</taxon>
        <taxon>Burkholderiaceae</taxon>
        <taxon>Cupriavidus</taxon>
    </lineage>
</organism>
<keyword id="KW-0997">Cell inner membrane</keyword>
<keyword id="KW-1003">Cell membrane</keyword>
<keyword id="KW-0406">Ion transport</keyword>
<keyword id="KW-0472">Membrane</keyword>
<keyword id="KW-0630">Potassium</keyword>
<keyword id="KW-0633">Potassium transport</keyword>
<keyword id="KW-1185">Reference proteome</keyword>
<keyword id="KW-0769">Symport</keyword>
<keyword id="KW-0812">Transmembrane</keyword>
<keyword id="KW-1133">Transmembrane helix</keyword>
<keyword id="KW-0813">Transport</keyword>
<comment type="function">
    <text evidence="1">Transport of potassium into the cell. Likely operates as a K(+):H(+) symporter.</text>
</comment>
<comment type="catalytic activity">
    <reaction evidence="1">
        <text>K(+)(in) + H(+)(in) = K(+)(out) + H(+)(out)</text>
        <dbReference type="Rhea" id="RHEA:28490"/>
        <dbReference type="ChEBI" id="CHEBI:15378"/>
        <dbReference type="ChEBI" id="CHEBI:29103"/>
    </reaction>
    <physiologicalReaction direction="right-to-left" evidence="1">
        <dbReference type="Rhea" id="RHEA:28492"/>
    </physiologicalReaction>
</comment>
<comment type="subcellular location">
    <subcellularLocation>
        <location evidence="1">Cell inner membrane</location>
        <topology evidence="1">Multi-pass membrane protein</topology>
    </subcellularLocation>
</comment>
<comment type="similarity">
    <text evidence="1">Belongs to the HAK/KUP transporter (TC 2.A.72) family.</text>
</comment>
<comment type="sequence caution" evidence="2">
    <conflict type="erroneous initiation">
        <sequence resource="EMBL-CDS" id="ABF08117"/>
    </conflict>
</comment>